<protein>
    <recommendedName>
        <fullName>SWI/SNF-related matrix-associated actin-dependent regulator of chromatin subfamily B member 1</fullName>
    </recommendedName>
</protein>
<dbReference type="EMBL" id="BC072865">
    <property type="protein sequence ID" value="AAH72865.1"/>
    <property type="molecule type" value="mRNA"/>
</dbReference>
<dbReference type="RefSeq" id="NP_001085508.1">
    <property type="nucleotide sequence ID" value="NM_001092039.1"/>
</dbReference>
<dbReference type="SMR" id="Q6GQ82"/>
<dbReference type="BioGRID" id="102097">
    <property type="interactions" value="1"/>
</dbReference>
<dbReference type="DNASU" id="443934"/>
<dbReference type="GeneID" id="443934"/>
<dbReference type="KEGG" id="xla:443934"/>
<dbReference type="AGR" id="Xenbase:XB-GENE-866272"/>
<dbReference type="CTD" id="443934"/>
<dbReference type="Xenbase" id="XB-GENE-866272">
    <property type="gene designation" value="smarcb1.S"/>
</dbReference>
<dbReference type="OrthoDB" id="515064at2759"/>
<dbReference type="Proteomes" id="UP000186698">
    <property type="component" value="Chromosome 1S"/>
</dbReference>
<dbReference type="Bgee" id="443934">
    <property type="expression patterns" value="Expressed in neurula embryo and 19 other cell types or tissues"/>
</dbReference>
<dbReference type="GO" id="GO:0035060">
    <property type="term" value="C:brahma complex"/>
    <property type="evidence" value="ECO:0000318"/>
    <property type="project" value="GO_Central"/>
</dbReference>
<dbReference type="GO" id="GO:0071565">
    <property type="term" value="C:nBAF complex"/>
    <property type="evidence" value="ECO:0000318"/>
    <property type="project" value="GO_Central"/>
</dbReference>
<dbReference type="GO" id="GO:0071564">
    <property type="term" value="C:npBAF complex"/>
    <property type="evidence" value="ECO:0000318"/>
    <property type="project" value="GO_Central"/>
</dbReference>
<dbReference type="GO" id="GO:0000228">
    <property type="term" value="C:nuclear chromosome"/>
    <property type="evidence" value="ECO:0007669"/>
    <property type="project" value="InterPro"/>
</dbReference>
<dbReference type="GO" id="GO:0005634">
    <property type="term" value="C:nucleus"/>
    <property type="evidence" value="ECO:0000318"/>
    <property type="project" value="GO_Central"/>
</dbReference>
<dbReference type="GO" id="GO:0003677">
    <property type="term" value="F:DNA binding"/>
    <property type="evidence" value="ECO:0000250"/>
    <property type="project" value="UniProtKB"/>
</dbReference>
<dbReference type="GO" id="GO:0003713">
    <property type="term" value="F:transcription coactivator activity"/>
    <property type="evidence" value="ECO:0000318"/>
    <property type="project" value="GO_Central"/>
</dbReference>
<dbReference type="GO" id="GO:0006338">
    <property type="term" value="P:chromatin remodeling"/>
    <property type="evidence" value="ECO:0000318"/>
    <property type="project" value="GO_Central"/>
</dbReference>
<dbReference type="GO" id="GO:0007399">
    <property type="term" value="P:nervous system development"/>
    <property type="evidence" value="ECO:0007669"/>
    <property type="project" value="UniProtKB-KW"/>
</dbReference>
<dbReference type="GO" id="GO:0006357">
    <property type="term" value="P:regulation of transcription by RNA polymerase II"/>
    <property type="evidence" value="ECO:0000318"/>
    <property type="project" value="GO_Central"/>
</dbReference>
<dbReference type="CDD" id="cd21086">
    <property type="entry name" value="WH_NTD_SMARCB1"/>
    <property type="match status" value="1"/>
</dbReference>
<dbReference type="InterPro" id="IPR048664">
    <property type="entry name" value="INI1_DNA-bd"/>
</dbReference>
<dbReference type="InterPro" id="IPR017393">
    <property type="entry name" value="Sfh1/SNF5"/>
</dbReference>
<dbReference type="InterPro" id="IPR006939">
    <property type="entry name" value="SNF5"/>
</dbReference>
<dbReference type="PANTHER" id="PTHR10019">
    <property type="entry name" value="SNF5"/>
    <property type="match status" value="1"/>
</dbReference>
<dbReference type="Pfam" id="PF21459">
    <property type="entry name" value="INI1_DNA-bd"/>
    <property type="match status" value="1"/>
</dbReference>
<dbReference type="Pfam" id="PF04855">
    <property type="entry name" value="SNF5"/>
    <property type="match status" value="1"/>
</dbReference>
<dbReference type="PIRSF" id="PIRSF038126">
    <property type="entry name" value="SWI_SNF"/>
    <property type="match status" value="1"/>
</dbReference>
<keyword id="KW-0010">Activator</keyword>
<keyword id="KW-0238">DNA-binding</keyword>
<keyword id="KW-0524">Neurogenesis</keyword>
<keyword id="KW-0539">Nucleus</keyword>
<keyword id="KW-1185">Reference proteome</keyword>
<keyword id="KW-0804">Transcription</keyword>
<keyword id="KW-0805">Transcription regulation</keyword>
<proteinExistence type="evidence at transcript level"/>
<feature type="chain" id="PRO_0000205951" description="SWI/SNF-related matrix-associated actin-dependent regulator of chromatin subfamily B member 1">
    <location>
        <begin position="1"/>
        <end position="378"/>
    </location>
</feature>
<feature type="region of interest" description="DNA-binding" evidence="2">
    <location>
        <begin position="1"/>
        <end position="106"/>
    </location>
</feature>
<reference key="1">
    <citation type="submission" date="2004-06" db="EMBL/GenBank/DDBJ databases">
        <authorList>
            <consortium name="NIH - Xenopus Gene Collection (XGC) project"/>
        </authorList>
    </citation>
    <scope>NUCLEOTIDE SEQUENCE [LARGE SCALE MRNA]</scope>
    <source>
        <tissue>Ovary</tissue>
    </source>
</reference>
<organism>
    <name type="scientific">Xenopus laevis</name>
    <name type="common">African clawed frog</name>
    <dbReference type="NCBI Taxonomy" id="8355"/>
    <lineage>
        <taxon>Eukaryota</taxon>
        <taxon>Metazoa</taxon>
        <taxon>Chordata</taxon>
        <taxon>Craniata</taxon>
        <taxon>Vertebrata</taxon>
        <taxon>Euteleostomi</taxon>
        <taxon>Amphibia</taxon>
        <taxon>Batrachia</taxon>
        <taxon>Anura</taxon>
        <taxon>Pipoidea</taxon>
        <taxon>Pipidae</taxon>
        <taxon>Xenopodinae</taxon>
        <taxon>Xenopus</taxon>
        <taxon>Xenopus</taxon>
    </lineage>
</organism>
<sequence>MIMALSKTFGQKPVKFQLEEDGDYYMIGSEVGNYLRMFRGSLYKRYPSLWRRLATVEERKKIVASSHGKKYHGHTTLATSVTLLKASEVEEILDGNDEKYKAVSISTEPPTYLREQKAKRNSQWVPTLPNSSHHLDAVPCSTTINRNRMGRDKKRTFPLCFDDHDPAVIHENAAQPEVLVPIRLDMEIDGQKLRDAFTWNMNEKLMTPEMFAEILCDDLDLNPLAFVPAIASAIRQQIESYPTDSILEDQSDQRVIIKLNIHVGNISLVDQFEWDMSEKENSPEKFALKLCSELGLGGEFVTTIAYSIRGQLSWHQKTYAFSENPLPTVEIAIRNTGDADQWCPLLETLTDAEMEKKIRDQDRNTRRMRRLANTAPAW</sequence>
<comment type="function">
    <text evidence="2">Involved in chromatin-remodeling. Core component of the BAF (SWI/SNF) complex. This ATP-dependent chromatin-remodeling complex plays important roles in cell proliferation and differentiation, in cellular antiviral activities and inhibition of tumor formation. Belongs to the neural progenitors-specific chromatin remodeling complex (npBAF complex) and the neuron-specific chromatin remodeling complex (nBAF complex) and may play a role in neural development (By similarity).</text>
</comment>
<comment type="subunit">
    <text evidence="2 3">Component of the multiprotein chromatin-remodeling complexes SWI/SNF. Component of neural progenitors-specific chromatin remodeling complex (npBAF complex) and the neuron-specific chromatin remodeling complex (nBAF complex) (By similarity). Component of the BAF (SWI/SNF) chromatin remodeling complex. Component of the SWI/SNF-B (PBAF) chromatin remodeling complex. Binds to double-stranded DNA (By similarity).</text>
</comment>
<comment type="subcellular location">
    <subcellularLocation>
        <location evidence="1">Nucleus</location>
    </subcellularLocation>
</comment>
<comment type="domain">
    <text evidence="2">The N-terminal DNA-binding region is structurally similar to winged helix domains.</text>
</comment>
<comment type="similarity">
    <text evidence="4">Belongs to the SNF5 family.</text>
</comment>
<name>SNF5_XENLA</name>
<gene>
    <name type="primary">smarcb1</name>
</gene>
<accession>Q6GQ82</accession>
<evidence type="ECO:0000250" key="1"/>
<evidence type="ECO:0000250" key="2">
    <source>
        <dbReference type="UniProtKB" id="Q12824"/>
    </source>
</evidence>
<evidence type="ECO:0000250" key="3">
    <source>
        <dbReference type="UniProtKB" id="Q9Z0H3"/>
    </source>
</evidence>
<evidence type="ECO:0000305" key="4"/>